<accession>A0M5D4</accession>
<name>GCSP_CHRFK</name>
<feature type="chain" id="PRO_1000045584" description="Glycine dehydrogenase (decarboxylating)">
    <location>
        <begin position="1"/>
        <end position="949"/>
    </location>
</feature>
<feature type="modified residue" description="N6-(pyridoxal phosphate)lysine" evidence="1">
    <location>
        <position position="700"/>
    </location>
</feature>
<protein>
    <recommendedName>
        <fullName evidence="1">Glycine dehydrogenase (decarboxylating)</fullName>
        <ecNumber evidence="1">1.4.4.2</ecNumber>
    </recommendedName>
    <alternativeName>
        <fullName evidence="1">Glycine cleavage system P-protein</fullName>
    </alternativeName>
    <alternativeName>
        <fullName evidence="1">Glycine decarboxylase</fullName>
    </alternativeName>
    <alternativeName>
        <fullName evidence="1">Glycine dehydrogenase (aminomethyl-transferring)</fullName>
    </alternativeName>
</protein>
<reference key="1">
    <citation type="journal article" date="2006" name="Environ. Microbiol.">
        <title>Whole genome analysis of the marine Bacteroidetes'Gramella forsetii' reveals adaptations to degradation of polymeric organic matter.</title>
        <authorList>
            <person name="Bauer M."/>
            <person name="Kube M."/>
            <person name="Teeling H."/>
            <person name="Richter M."/>
            <person name="Lombardot T."/>
            <person name="Allers E."/>
            <person name="Wuerdemann C.A."/>
            <person name="Quast C."/>
            <person name="Kuhl H."/>
            <person name="Knaust F."/>
            <person name="Woebken D."/>
            <person name="Bischof K."/>
            <person name="Mussmann M."/>
            <person name="Choudhuri J.V."/>
            <person name="Meyer F."/>
            <person name="Reinhardt R."/>
            <person name="Amann R.I."/>
            <person name="Gloeckner F.O."/>
        </authorList>
    </citation>
    <scope>NUCLEOTIDE SEQUENCE [LARGE SCALE GENOMIC DNA]</scope>
    <source>
        <strain>DSM 17595 / CGMCC 1.15422 / KT0803</strain>
    </source>
</reference>
<comment type="function">
    <text evidence="1">The glycine cleavage system catalyzes the degradation of glycine. The P protein binds the alpha-amino group of glycine through its pyridoxal phosphate cofactor; CO(2) is released and the remaining methylamine moiety is then transferred to the lipoamide cofactor of the H protein.</text>
</comment>
<comment type="catalytic activity">
    <reaction evidence="1">
        <text>N(6)-[(R)-lipoyl]-L-lysyl-[glycine-cleavage complex H protein] + glycine + H(+) = N(6)-[(R)-S(8)-aminomethyldihydrolipoyl]-L-lysyl-[glycine-cleavage complex H protein] + CO2</text>
        <dbReference type="Rhea" id="RHEA:24304"/>
        <dbReference type="Rhea" id="RHEA-COMP:10494"/>
        <dbReference type="Rhea" id="RHEA-COMP:10495"/>
        <dbReference type="ChEBI" id="CHEBI:15378"/>
        <dbReference type="ChEBI" id="CHEBI:16526"/>
        <dbReference type="ChEBI" id="CHEBI:57305"/>
        <dbReference type="ChEBI" id="CHEBI:83099"/>
        <dbReference type="ChEBI" id="CHEBI:83143"/>
        <dbReference type="EC" id="1.4.4.2"/>
    </reaction>
</comment>
<comment type="cofactor">
    <cofactor evidence="1">
        <name>pyridoxal 5'-phosphate</name>
        <dbReference type="ChEBI" id="CHEBI:597326"/>
    </cofactor>
</comment>
<comment type="subunit">
    <text evidence="1">The glycine cleavage system is composed of four proteins: P, T, L and H.</text>
</comment>
<comment type="similarity">
    <text evidence="1">Belongs to the GcvP family.</text>
</comment>
<evidence type="ECO:0000255" key="1">
    <source>
        <dbReference type="HAMAP-Rule" id="MF_00711"/>
    </source>
</evidence>
<keyword id="KW-0560">Oxidoreductase</keyword>
<keyword id="KW-0663">Pyridoxal phosphate</keyword>
<sequence>MRTDSFALRHIGPKAENLQEMLDTIGVESIEQLIYETIPDDIRLDQPLNLPKAMSENQYAEHIKKLSEKNRVFKTYIGLGYHQAILPAVIQRNILENPGWYTAYTPYQAEIAQGRLEALLNFQTMVSDLTGMEIANASLLDESTAAAEAMALLHAVRDRKQKKDDVNKFFVSQQTLPQTISLMETRANFLGIDMVVGDHEEFDFSEEYFGALVQYPGKFGQIFDYANFVENCKNANIKTAFAADILSLVKLQAPGELGVDVVVGTTQRFGIPLGYGGPHAAYFATKEEYKRNLPGRIIGLTKDLDGNNALRMALQTREQHIKRDKATSNICTAQVLLAVMAGMYAVYHGPKGLEYIANIVHASAVSLEDSLKELGFEQLNSAYFDTIHVKANASKLKAIAEKHEINFFYPDAESACISINETTTTDDLNAVIAVFAELSEKKHAEIEELSERTAIPKNLERKTEFLTHEVFNLYHSETELMRYIKKLERKDLSLNHSMISLGSCTMKLNAASEMLPLSNPQWGNMHPFAPVNQAEGYQTVLKELEHQLTEITGFSATSLQPNSGAQGEYAGLMVIRAYHEANGEGHRNVCLIPSSAHGTNPASAVMAGMKVVVTKASENGNIDVDDLREKAIKHKDNLAALMVTYPSTHGVFESAIREITNIIHENGGQVYMDGANMNAQVGLTNPGRIGADVCHLNLHKTFAIPHGGGGPGVGPICVAEQLKPFLPGNPVIKTGGEKAIGAISSAPWGSSLVCLISYGYIKMLGTGGLQQATEYAILNANYIKARLNDHYKTLYSGERGRAAHEMIIDCRPFKEQGIEVTDIAKRLIDYGFHSPTVSFPVAGTMMIEPTESESKPELDRFCDALISIRKEIDEVSVDDSNNVLKNAPHTIHMLTSDEWKLPYSREKAAYPLDHLHDNKFWPSVRRVDEAFGDRNLMCTCPPTEEYAEA</sequence>
<organism>
    <name type="scientific">Christiangramia forsetii (strain DSM 17595 / CGMCC 1.15422 / KT0803)</name>
    <name type="common">Gramella forsetii</name>
    <dbReference type="NCBI Taxonomy" id="411154"/>
    <lineage>
        <taxon>Bacteria</taxon>
        <taxon>Pseudomonadati</taxon>
        <taxon>Bacteroidota</taxon>
        <taxon>Flavobacteriia</taxon>
        <taxon>Flavobacteriales</taxon>
        <taxon>Flavobacteriaceae</taxon>
        <taxon>Christiangramia</taxon>
    </lineage>
</organism>
<dbReference type="EC" id="1.4.4.2" evidence="1"/>
<dbReference type="EMBL" id="CU207366">
    <property type="protein sequence ID" value="CAL67829.1"/>
    <property type="molecule type" value="Genomic_DNA"/>
</dbReference>
<dbReference type="RefSeq" id="WP_011710730.1">
    <property type="nucleotide sequence ID" value="NC_008571.1"/>
</dbReference>
<dbReference type="SMR" id="A0M5D4"/>
<dbReference type="STRING" id="411154.GFO_2875"/>
<dbReference type="KEGG" id="gfo:GFO_2875"/>
<dbReference type="eggNOG" id="COG0403">
    <property type="taxonomic scope" value="Bacteria"/>
</dbReference>
<dbReference type="eggNOG" id="COG1003">
    <property type="taxonomic scope" value="Bacteria"/>
</dbReference>
<dbReference type="HOGENOM" id="CLU_004620_3_2_10"/>
<dbReference type="OrthoDB" id="9801272at2"/>
<dbReference type="Proteomes" id="UP000000755">
    <property type="component" value="Chromosome"/>
</dbReference>
<dbReference type="GO" id="GO:0005829">
    <property type="term" value="C:cytosol"/>
    <property type="evidence" value="ECO:0007669"/>
    <property type="project" value="TreeGrafter"/>
</dbReference>
<dbReference type="GO" id="GO:0005960">
    <property type="term" value="C:glycine cleavage complex"/>
    <property type="evidence" value="ECO:0007669"/>
    <property type="project" value="TreeGrafter"/>
</dbReference>
<dbReference type="GO" id="GO:0016594">
    <property type="term" value="F:glycine binding"/>
    <property type="evidence" value="ECO:0007669"/>
    <property type="project" value="TreeGrafter"/>
</dbReference>
<dbReference type="GO" id="GO:0004375">
    <property type="term" value="F:glycine dehydrogenase (decarboxylating) activity"/>
    <property type="evidence" value="ECO:0007669"/>
    <property type="project" value="UniProtKB-EC"/>
</dbReference>
<dbReference type="GO" id="GO:0030170">
    <property type="term" value="F:pyridoxal phosphate binding"/>
    <property type="evidence" value="ECO:0007669"/>
    <property type="project" value="TreeGrafter"/>
</dbReference>
<dbReference type="GO" id="GO:0019464">
    <property type="term" value="P:glycine decarboxylation via glycine cleavage system"/>
    <property type="evidence" value="ECO:0007669"/>
    <property type="project" value="UniProtKB-UniRule"/>
</dbReference>
<dbReference type="CDD" id="cd00613">
    <property type="entry name" value="GDC-P"/>
    <property type="match status" value="2"/>
</dbReference>
<dbReference type="FunFam" id="3.40.640.10:FF:000005">
    <property type="entry name" value="Glycine dehydrogenase (decarboxylating), mitochondrial"/>
    <property type="match status" value="1"/>
</dbReference>
<dbReference type="FunFam" id="3.40.640.10:FF:000007">
    <property type="entry name" value="glycine dehydrogenase (Decarboxylating), mitochondrial"/>
    <property type="match status" value="1"/>
</dbReference>
<dbReference type="Gene3D" id="3.90.1150.10">
    <property type="entry name" value="Aspartate Aminotransferase, domain 1"/>
    <property type="match status" value="2"/>
</dbReference>
<dbReference type="Gene3D" id="3.40.640.10">
    <property type="entry name" value="Type I PLP-dependent aspartate aminotransferase-like (Major domain)"/>
    <property type="match status" value="2"/>
</dbReference>
<dbReference type="HAMAP" id="MF_00711">
    <property type="entry name" value="GcvP"/>
    <property type="match status" value="1"/>
</dbReference>
<dbReference type="InterPro" id="IPR003437">
    <property type="entry name" value="GcvP"/>
</dbReference>
<dbReference type="InterPro" id="IPR049316">
    <property type="entry name" value="GDC-P_C"/>
</dbReference>
<dbReference type="InterPro" id="IPR049315">
    <property type="entry name" value="GDC-P_N"/>
</dbReference>
<dbReference type="InterPro" id="IPR020581">
    <property type="entry name" value="GDC_P"/>
</dbReference>
<dbReference type="InterPro" id="IPR015424">
    <property type="entry name" value="PyrdxlP-dep_Trfase"/>
</dbReference>
<dbReference type="InterPro" id="IPR015421">
    <property type="entry name" value="PyrdxlP-dep_Trfase_major"/>
</dbReference>
<dbReference type="InterPro" id="IPR015422">
    <property type="entry name" value="PyrdxlP-dep_Trfase_small"/>
</dbReference>
<dbReference type="NCBIfam" id="TIGR00461">
    <property type="entry name" value="gcvP"/>
    <property type="match status" value="1"/>
</dbReference>
<dbReference type="NCBIfam" id="NF003346">
    <property type="entry name" value="PRK04366.1"/>
    <property type="match status" value="1"/>
</dbReference>
<dbReference type="PANTHER" id="PTHR11773:SF1">
    <property type="entry name" value="GLYCINE DEHYDROGENASE (DECARBOXYLATING), MITOCHONDRIAL"/>
    <property type="match status" value="1"/>
</dbReference>
<dbReference type="PANTHER" id="PTHR11773">
    <property type="entry name" value="GLYCINE DEHYDROGENASE, DECARBOXYLATING"/>
    <property type="match status" value="1"/>
</dbReference>
<dbReference type="Pfam" id="PF21478">
    <property type="entry name" value="GcvP2_C"/>
    <property type="match status" value="1"/>
</dbReference>
<dbReference type="Pfam" id="PF02347">
    <property type="entry name" value="GDC-P"/>
    <property type="match status" value="2"/>
</dbReference>
<dbReference type="SUPFAM" id="SSF53383">
    <property type="entry name" value="PLP-dependent transferases"/>
    <property type="match status" value="2"/>
</dbReference>
<proteinExistence type="inferred from homology"/>
<gene>
    <name evidence="1" type="primary">gcvP</name>
    <name type="ordered locus">GFO_2875</name>
</gene>